<organism>
    <name type="scientific">Bradyrhizobium diazoefficiens (strain JCM 10833 / BCRC 13528 / IAM 13628 / NBRC 14792 / USDA 110)</name>
    <dbReference type="NCBI Taxonomy" id="224911"/>
    <lineage>
        <taxon>Bacteria</taxon>
        <taxon>Pseudomonadati</taxon>
        <taxon>Pseudomonadota</taxon>
        <taxon>Alphaproteobacteria</taxon>
        <taxon>Hyphomicrobiales</taxon>
        <taxon>Nitrobacteraceae</taxon>
        <taxon>Bradyrhizobium</taxon>
    </lineage>
</organism>
<gene>
    <name evidence="1" type="primary">rpmF</name>
    <name type="ordered locus">bsr0948</name>
</gene>
<name>RL32_BRADU</name>
<reference key="1">
    <citation type="journal article" date="2002" name="DNA Res.">
        <title>Complete genomic sequence of nitrogen-fixing symbiotic bacterium Bradyrhizobium japonicum USDA110.</title>
        <authorList>
            <person name="Kaneko T."/>
            <person name="Nakamura Y."/>
            <person name="Sato S."/>
            <person name="Minamisawa K."/>
            <person name="Uchiumi T."/>
            <person name="Sasamoto S."/>
            <person name="Watanabe A."/>
            <person name="Idesawa K."/>
            <person name="Iriguchi M."/>
            <person name="Kawashima K."/>
            <person name="Kohara M."/>
            <person name="Matsumoto M."/>
            <person name="Shimpo S."/>
            <person name="Tsuruoka H."/>
            <person name="Wada T."/>
            <person name="Yamada M."/>
            <person name="Tabata S."/>
        </authorList>
    </citation>
    <scope>NUCLEOTIDE SEQUENCE [LARGE SCALE GENOMIC DNA]</scope>
    <source>
        <strain>JCM 10833 / BCRC 13528 / IAM 13628 / NBRC 14792 / USDA 110</strain>
    </source>
</reference>
<comment type="similarity">
    <text evidence="1">Belongs to the bacterial ribosomal protein bL32 family.</text>
</comment>
<feature type="chain" id="PRO_0000172316" description="Large ribosomal subunit protein bL32">
    <location>
        <begin position="1"/>
        <end position="60"/>
    </location>
</feature>
<feature type="region of interest" description="Disordered" evidence="2">
    <location>
        <begin position="1"/>
        <end position="60"/>
    </location>
</feature>
<feature type="compositionally biased region" description="Basic residues" evidence="2">
    <location>
        <begin position="1"/>
        <end position="16"/>
    </location>
</feature>
<feature type="compositionally biased region" description="Basic and acidic residues" evidence="2">
    <location>
        <begin position="17"/>
        <end position="44"/>
    </location>
</feature>
<protein>
    <recommendedName>
        <fullName evidence="1">Large ribosomal subunit protein bL32</fullName>
    </recommendedName>
    <alternativeName>
        <fullName evidence="3">50S ribosomal protein L32</fullName>
    </alternativeName>
</protein>
<proteinExistence type="inferred from homology"/>
<evidence type="ECO:0000255" key="1">
    <source>
        <dbReference type="HAMAP-Rule" id="MF_00340"/>
    </source>
</evidence>
<evidence type="ECO:0000256" key="2">
    <source>
        <dbReference type="SAM" id="MobiDB-lite"/>
    </source>
</evidence>
<evidence type="ECO:0000305" key="3"/>
<sequence length="60" mass="6979">MAVPRRKTSPSRRGMRRSADAIKKPTYVEDKDSGELRRPHHLDLKTGMYKGRQVLKKKES</sequence>
<dbReference type="EMBL" id="BA000040">
    <property type="protein sequence ID" value="BAC46213.1"/>
    <property type="molecule type" value="Genomic_DNA"/>
</dbReference>
<dbReference type="RefSeq" id="NP_767588.1">
    <property type="nucleotide sequence ID" value="NC_004463.1"/>
</dbReference>
<dbReference type="RefSeq" id="WP_007598106.1">
    <property type="nucleotide sequence ID" value="NZ_CP011360.1"/>
</dbReference>
<dbReference type="SMR" id="Q89VU7"/>
<dbReference type="FunCoup" id="Q89VU7">
    <property type="interactions" value="202"/>
</dbReference>
<dbReference type="STRING" id="224911.AAV28_01580"/>
<dbReference type="EnsemblBacteria" id="BAC46213">
    <property type="protein sequence ID" value="BAC46213"/>
    <property type="gene ID" value="BAC46213"/>
</dbReference>
<dbReference type="GeneID" id="93217234"/>
<dbReference type="KEGG" id="bja:bsr0948"/>
<dbReference type="PATRIC" id="fig|224911.44.peg.336"/>
<dbReference type="eggNOG" id="COG0333">
    <property type="taxonomic scope" value="Bacteria"/>
</dbReference>
<dbReference type="HOGENOM" id="CLU_129084_2_2_5"/>
<dbReference type="InParanoid" id="Q89VU7"/>
<dbReference type="OrthoDB" id="9801927at2"/>
<dbReference type="PhylomeDB" id="Q89VU7"/>
<dbReference type="PRO" id="PR:Q89VU7"/>
<dbReference type="Proteomes" id="UP000002526">
    <property type="component" value="Chromosome"/>
</dbReference>
<dbReference type="GO" id="GO:0022625">
    <property type="term" value="C:cytosolic large ribosomal subunit"/>
    <property type="evidence" value="ECO:0000318"/>
    <property type="project" value="GO_Central"/>
</dbReference>
<dbReference type="GO" id="GO:0003735">
    <property type="term" value="F:structural constituent of ribosome"/>
    <property type="evidence" value="ECO:0000318"/>
    <property type="project" value="GO_Central"/>
</dbReference>
<dbReference type="GO" id="GO:0006412">
    <property type="term" value="P:translation"/>
    <property type="evidence" value="ECO:0007669"/>
    <property type="project" value="UniProtKB-UniRule"/>
</dbReference>
<dbReference type="Gene3D" id="1.20.5.640">
    <property type="entry name" value="Single helix bin"/>
    <property type="match status" value="1"/>
</dbReference>
<dbReference type="HAMAP" id="MF_00340">
    <property type="entry name" value="Ribosomal_bL32"/>
    <property type="match status" value="1"/>
</dbReference>
<dbReference type="InterPro" id="IPR002677">
    <property type="entry name" value="Ribosomal_bL32"/>
</dbReference>
<dbReference type="InterPro" id="IPR044957">
    <property type="entry name" value="Ribosomal_bL32_bact"/>
</dbReference>
<dbReference type="InterPro" id="IPR011332">
    <property type="entry name" value="Ribosomal_zn-bd"/>
</dbReference>
<dbReference type="NCBIfam" id="TIGR01031">
    <property type="entry name" value="rpmF_bact"/>
    <property type="match status" value="1"/>
</dbReference>
<dbReference type="PANTHER" id="PTHR35534">
    <property type="entry name" value="50S RIBOSOMAL PROTEIN L32"/>
    <property type="match status" value="1"/>
</dbReference>
<dbReference type="PANTHER" id="PTHR35534:SF1">
    <property type="entry name" value="LARGE RIBOSOMAL SUBUNIT PROTEIN BL32"/>
    <property type="match status" value="1"/>
</dbReference>
<dbReference type="Pfam" id="PF01783">
    <property type="entry name" value="Ribosomal_L32p"/>
    <property type="match status" value="1"/>
</dbReference>
<dbReference type="SUPFAM" id="SSF57829">
    <property type="entry name" value="Zn-binding ribosomal proteins"/>
    <property type="match status" value="1"/>
</dbReference>
<keyword id="KW-1185">Reference proteome</keyword>
<keyword id="KW-0687">Ribonucleoprotein</keyword>
<keyword id="KW-0689">Ribosomal protein</keyword>
<accession>Q89VU7</accession>